<reference key="1">
    <citation type="journal article" date="2010" name="Genome Biol.">
        <title>Structure and dynamics of the pan-genome of Streptococcus pneumoniae and closely related species.</title>
        <authorList>
            <person name="Donati C."/>
            <person name="Hiller N.L."/>
            <person name="Tettelin H."/>
            <person name="Muzzi A."/>
            <person name="Croucher N.J."/>
            <person name="Angiuoli S.V."/>
            <person name="Oggioni M."/>
            <person name="Dunning Hotopp J.C."/>
            <person name="Hu F.Z."/>
            <person name="Riley D.R."/>
            <person name="Covacci A."/>
            <person name="Mitchell T.J."/>
            <person name="Bentley S.D."/>
            <person name="Kilian M."/>
            <person name="Ehrlich G.D."/>
            <person name="Rappuoli R."/>
            <person name="Moxon E.R."/>
            <person name="Masignani V."/>
        </authorList>
    </citation>
    <scope>NUCLEOTIDE SEQUENCE [LARGE SCALE GENOMIC DNA]</scope>
    <source>
        <strain>Taiwan19F-14</strain>
    </source>
</reference>
<proteinExistence type="inferred from homology"/>
<protein>
    <recommendedName>
        <fullName evidence="1">DNA ligase</fullName>
        <ecNumber evidence="1">6.5.1.2</ecNumber>
    </recommendedName>
    <alternativeName>
        <fullName evidence="1">Polydeoxyribonucleotide synthase [NAD(+)]</fullName>
    </alternativeName>
</protein>
<gene>
    <name evidence="1" type="primary">ligA</name>
    <name type="ordered locus">SPT_1163</name>
</gene>
<name>DNLJ_STRZT</name>
<sequence length="652" mass="72304">MNKRMNELVALLNRYATEYYTSDNPSVSDSEYDRLYRELVELETAYPEQVLADSPTHRVGGKVLDGFEKYSHQYPLYSLQDAFSREELDAFDARVRKEVAHPTYICELKIDGLSISLTYEKGILVAGVTRGDGSIGENITENLKRVKDIPLTLPEELDITVRGECYMPRASFDQVNQVRQENGEPEFANPRNAAAGTLRQLDTAVVAKRNLATFLYQEASPSTRDSQEKGLKYLEQLGFVVNPKRILAENIDEIWNFIQEVGQERENLPYDIDGVVIKVNDLASQEELGFTVKAPKWAVAYKFPAEEKEAQLLSVDWTVGRTGVVTPTANLTPVQLAGTTVSRATLHNVDYIAEKDIRKDDTVIVYKAGDIIPAVLRVVESKRVSEEKLDIPTNCPSCNSDLLHFEDEVALRCINPRCPAQIMEGLIHFASRDAMNITGLGPSIVEKLFAANLVKDVADIYRLQEEDFLLLEGVKEKSAAKLYQAIQASKENSAEKLLFGLGIRHVGSKASQLLLQYFHSIENLYQADSEEVASIESLGGVIAKSLQTYFATEGSEILLRELKETGVNLDYKGQTVVADAALSGLTVVLTGKLERLKRSEAKSKLESLGAKVTGSVSKKTDLVVVGADAGSKLQKAQELGIQVRDEAWLESL</sequence>
<feature type="chain" id="PRO_0000380488" description="DNA ligase">
    <location>
        <begin position="1"/>
        <end position="652"/>
    </location>
</feature>
<feature type="domain" description="BRCT" evidence="1">
    <location>
        <begin position="577"/>
        <end position="652"/>
    </location>
</feature>
<feature type="active site" description="N6-AMP-lysine intermediate" evidence="1">
    <location>
        <position position="109"/>
    </location>
</feature>
<feature type="binding site" evidence="1">
    <location>
        <begin position="29"/>
        <end position="33"/>
    </location>
    <ligand>
        <name>NAD(+)</name>
        <dbReference type="ChEBI" id="CHEBI:57540"/>
    </ligand>
</feature>
<feature type="binding site" evidence="1">
    <location>
        <begin position="78"/>
        <end position="79"/>
    </location>
    <ligand>
        <name>NAD(+)</name>
        <dbReference type="ChEBI" id="CHEBI:57540"/>
    </ligand>
</feature>
<feature type="binding site" evidence="1">
    <location>
        <position position="107"/>
    </location>
    <ligand>
        <name>NAD(+)</name>
        <dbReference type="ChEBI" id="CHEBI:57540"/>
    </ligand>
</feature>
<feature type="binding site" evidence="1">
    <location>
        <position position="130"/>
    </location>
    <ligand>
        <name>NAD(+)</name>
        <dbReference type="ChEBI" id="CHEBI:57540"/>
    </ligand>
</feature>
<feature type="binding site" evidence="1">
    <location>
        <position position="164"/>
    </location>
    <ligand>
        <name>NAD(+)</name>
        <dbReference type="ChEBI" id="CHEBI:57540"/>
    </ligand>
</feature>
<feature type="binding site" evidence="1">
    <location>
        <position position="278"/>
    </location>
    <ligand>
        <name>NAD(+)</name>
        <dbReference type="ChEBI" id="CHEBI:57540"/>
    </ligand>
</feature>
<feature type="binding site" evidence="1">
    <location>
        <position position="302"/>
    </location>
    <ligand>
        <name>NAD(+)</name>
        <dbReference type="ChEBI" id="CHEBI:57540"/>
    </ligand>
</feature>
<feature type="binding site" evidence="1">
    <location>
        <position position="395"/>
    </location>
    <ligand>
        <name>Zn(2+)</name>
        <dbReference type="ChEBI" id="CHEBI:29105"/>
    </ligand>
</feature>
<feature type="binding site" evidence="1">
    <location>
        <position position="398"/>
    </location>
    <ligand>
        <name>Zn(2+)</name>
        <dbReference type="ChEBI" id="CHEBI:29105"/>
    </ligand>
</feature>
<feature type="binding site" evidence="1">
    <location>
        <position position="413"/>
    </location>
    <ligand>
        <name>Zn(2+)</name>
        <dbReference type="ChEBI" id="CHEBI:29105"/>
    </ligand>
</feature>
<feature type="binding site" evidence="1">
    <location>
        <position position="418"/>
    </location>
    <ligand>
        <name>Zn(2+)</name>
        <dbReference type="ChEBI" id="CHEBI:29105"/>
    </ligand>
</feature>
<accession>C1CRL7</accession>
<comment type="function">
    <text evidence="1">DNA ligase that catalyzes the formation of phosphodiester linkages between 5'-phosphoryl and 3'-hydroxyl groups in double-stranded DNA using NAD as a coenzyme and as the energy source for the reaction. It is essential for DNA replication and repair of damaged DNA.</text>
</comment>
<comment type="catalytic activity">
    <reaction evidence="1">
        <text>NAD(+) + (deoxyribonucleotide)n-3'-hydroxyl + 5'-phospho-(deoxyribonucleotide)m = (deoxyribonucleotide)n+m + AMP + beta-nicotinamide D-nucleotide.</text>
        <dbReference type="EC" id="6.5.1.2"/>
    </reaction>
</comment>
<comment type="cofactor">
    <cofactor evidence="1">
        <name>Mg(2+)</name>
        <dbReference type="ChEBI" id="CHEBI:18420"/>
    </cofactor>
    <cofactor evidence="1">
        <name>Mn(2+)</name>
        <dbReference type="ChEBI" id="CHEBI:29035"/>
    </cofactor>
</comment>
<comment type="similarity">
    <text evidence="1">Belongs to the NAD-dependent DNA ligase family. LigA subfamily.</text>
</comment>
<keyword id="KW-0227">DNA damage</keyword>
<keyword id="KW-0234">DNA repair</keyword>
<keyword id="KW-0235">DNA replication</keyword>
<keyword id="KW-0436">Ligase</keyword>
<keyword id="KW-0460">Magnesium</keyword>
<keyword id="KW-0464">Manganese</keyword>
<keyword id="KW-0479">Metal-binding</keyword>
<keyword id="KW-0520">NAD</keyword>
<keyword id="KW-0862">Zinc</keyword>
<evidence type="ECO:0000255" key="1">
    <source>
        <dbReference type="HAMAP-Rule" id="MF_01588"/>
    </source>
</evidence>
<dbReference type="EC" id="6.5.1.2" evidence="1"/>
<dbReference type="EMBL" id="CP000921">
    <property type="protein sequence ID" value="ACO22885.1"/>
    <property type="molecule type" value="Genomic_DNA"/>
</dbReference>
<dbReference type="RefSeq" id="WP_001042597.1">
    <property type="nucleotide sequence ID" value="NC_012469.1"/>
</dbReference>
<dbReference type="SMR" id="C1CRL7"/>
<dbReference type="KEGG" id="snt:SPT_1163"/>
<dbReference type="HOGENOM" id="CLU_007764_2_1_9"/>
<dbReference type="GO" id="GO:0005829">
    <property type="term" value="C:cytosol"/>
    <property type="evidence" value="ECO:0007669"/>
    <property type="project" value="TreeGrafter"/>
</dbReference>
<dbReference type="GO" id="GO:0003677">
    <property type="term" value="F:DNA binding"/>
    <property type="evidence" value="ECO:0007669"/>
    <property type="project" value="InterPro"/>
</dbReference>
<dbReference type="GO" id="GO:0003911">
    <property type="term" value="F:DNA ligase (NAD+) activity"/>
    <property type="evidence" value="ECO:0007669"/>
    <property type="project" value="UniProtKB-UniRule"/>
</dbReference>
<dbReference type="GO" id="GO:0046872">
    <property type="term" value="F:metal ion binding"/>
    <property type="evidence" value="ECO:0007669"/>
    <property type="project" value="UniProtKB-KW"/>
</dbReference>
<dbReference type="GO" id="GO:0006281">
    <property type="term" value="P:DNA repair"/>
    <property type="evidence" value="ECO:0007669"/>
    <property type="project" value="UniProtKB-KW"/>
</dbReference>
<dbReference type="GO" id="GO:0006260">
    <property type="term" value="P:DNA replication"/>
    <property type="evidence" value="ECO:0007669"/>
    <property type="project" value="UniProtKB-KW"/>
</dbReference>
<dbReference type="CDD" id="cd17748">
    <property type="entry name" value="BRCT_DNA_ligase_like"/>
    <property type="match status" value="1"/>
</dbReference>
<dbReference type="CDD" id="cd00114">
    <property type="entry name" value="LIGANc"/>
    <property type="match status" value="1"/>
</dbReference>
<dbReference type="FunFam" id="1.10.150.20:FF:000006">
    <property type="entry name" value="DNA ligase"/>
    <property type="match status" value="1"/>
</dbReference>
<dbReference type="FunFam" id="1.10.150.20:FF:000007">
    <property type="entry name" value="DNA ligase"/>
    <property type="match status" value="1"/>
</dbReference>
<dbReference type="FunFam" id="1.10.287.610:FF:000002">
    <property type="entry name" value="DNA ligase"/>
    <property type="match status" value="1"/>
</dbReference>
<dbReference type="FunFam" id="2.40.50.140:FF:000012">
    <property type="entry name" value="DNA ligase"/>
    <property type="match status" value="1"/>
</dbReference>
<dbReference type="FunFam" id="3.30.470.30:FF:000001">
    <property type="entry name" value="DNA ligase"/>
    <property type="match status" value="1"/>
</dbReference>
<dbReference type="FunFam" id="3.40.50.10190:FF:000045">
    <property type="entry name" value="DNA ligase"/>
    <property type="match status" value="1"/>
</dbReference>
<dbReference type="Gene3D" id="6.20.10.30">
    <property type="match status" value="1"/>
</dbReference>
<dbReference type="Gene3D" id="1.10.150.20">
    <property type="entry name" value="5' to 3' exonuclease, C-terminal subdomain"/>
    <property type="match status" value="2"/>
</dbReference>
<dbReference type="Gene3D" id="3.40.50.10190">
    <property type="entry name" value="BRCT domain"/>
    <property type="match status" value="1"/>
</dbReference>
<dbReference type="Gene3D" id="3.30.470.30">
    <property type="entry name" value="DNA ligase/mRNA capping enzyme"/>
    <property type="match status" value="1"/>
</dbReference>
<dbReference type="Gene3D" id="1.10.287.610">
    <property type="entry name" value="Helix hairpin bin"/>
    <property type="match status" value="1"/>
</dbReference>
<dbReference type="Gene3D" id="2.40.50.140">
    <property type="entry name" value="Nucleic acid-binding proteins"/>
    <property type="match status" value="1"/>
</dbReference>
<dbReference type="HAMAP" id="MF_01588">
    <property type="entry name" value="DNA_ligase_A"/>
    <property type="match status" value="1"/>
</dbReference>
<dbReference type="InterPro" id="IPR001357">
    <property type="entry name" value="BRCT_dom"/>
</dbReference>
<dbReference type="InterPro" id="IPR036420">
    <property type="entry name" value="BRCT_dom_sf"/>
</dbReference>
<dbReference type="InterPro" id="IPR041663">
    <property type="entry name" value="DisA/LigA_HHH"/>
</dbReference>
<dbReference type="InterPro" id="IPR001679">
    <property type="entry name" value="DNA_ligase"/>
</dbReference>
<dbReference type="InterPro" id="IPR018239">
    <property type="entry name" value="DNA_ligase_AS"/>
</dbReference>
<dbReference type="InterPro" id="IPR033136">
    <property type="entry name" value="DNA_ligase_CS"/>
</dbReference>
<dbReference type="InterPro" id="IPR013839">
    <property type="entry name" value="DNAligase_adenylation"/>
</dbReference>
<dbReference type="InterPro" id="IPR013840">
    <property type="entry name" value="DNAligase_N"/>
</dbReference>
<dbReference type="InterPro" id="IPR003583">
    <property type="entry name" value="Hlx-hairpin-Hlx_DNA-bd_motif"/>
</dbReference>
<dbReference type="InterPro" id="IPR012340">
    <property type="entry name" value="NA-bd_OB-fold"/>
</dbReference>
<dbReference type="InterPro" id="IPR004150">
    <property type="entry name" value="NAD_DNA_ligase_OB"/>
</dbReference>
<dbReference type="InterPro" id="IPR010994">
    <property type="entry name" value="RuvA_2-like"/>
</dbReference>
<dbReference type="InterPro" id="IPR004149">
    <property type="entry name" value="Znf_DNAligase_C4"/>
</dbReference>
<dbReference type="NCBIfam" id="TIGR00575">
    <property type="entry name" value="dnlj"/>
    <property type="match status" value="1"/>
</dbReference>
<dbReference type="NCBIfam" id="NF005932">
    <property type="entry name" value="PRK07956.1"/>
    <property type="match status" value="1"/>
</dbReference>
<dbReference type="PANTHER" id="PTHR23389">
    <property type="entry name" value="CHROMOSOME TRANSMISSION FIDELITY FACTOR 18"/>
    <property type="match status" value="1"/>
</dbReference>
<dbReference type="PANTHER" id="PTHR23389:SF9">
    <property type="entry name" value="DNA LIGASE"/>
    <property type="match status" value="1"/>
</dbReference>
<dbReference type="Pfam" id="PF00533">
    <property type="entry name" value="BRCT"/>
    <property type="match status" value="1"/>
</dbReference>
<dbReference type="Pfam" id="PF01653">
    <property type="entry name" value="DNA_ligase_aden"/>
    <property type="match status" value="1"/>
</dbReference>
<dbReference type="Pfam" id="PF03120">
    <property type="entry name" value="DNA_ligase_OB"/>
    <property type="match status" value="1"/>
</dbReference>
<dbReference type="Pfam" id="PF03119">
    <property type="entry name" value="DNA_ligase_ZBD"/>
    <property type="match status" value="1"/>
</dbReference>
<dbReference type="Pfam" id="PF12826">
    <property type="entry name" value="HHH_2"/>
    <property type="match status" value="1"/>
</dbReference>
<dbReference type="Pfam" id="PF14520">
    <property type="entry name" value="HHH_5"/>
    <property type="match status" value="1"/>
</dbReference>
<dbReference type="PIRSF" id="PIRSF001604">
    <property type="entry name" value="LigA"/>
    <property type="match status" value="1"/>
</dbReference>
<dbReference type="SMART" id="SM00292">
    <property type="entry name" value="BRCT"/>
    <property type="match status" value="1"/>
</dbReference>
<dbReference type="SMART" id="SM00278">
    <property type="entry name" value="HhH1"/>
    <property type="match status" value="2"/>
</dbReference>
<dbReference type="SMART" id="SM00532">
    <property type="entry name" value="LIGANc"/>
    <property type="match status" value="1"/>
</dbReference>
<dbReference type="SUPFAM" id="SSF52113">
    <property type="entry name" value="BRCT domain"/>
    <property type="match status" value="1"/>
</dbReference>
<dbReference type="SUPFAM" id="SSF56091">
    <property type="entry name" value="DNA ligase/mRNA capping enzyme, catalytic domain"/>
    <property type="match status" value="1"/>
</dbReference>
<dbReference type="SUPFAM" id="SSF50249">
    <property type="entry name" value="Nucleic acid-binding proteins"/>
    <property type="match status" value="1"/>
</dbReference>
<dbReference type="SUPFAM" id="SSF47781">
    <property type="entry name" value="RuvA domain 2-like"/>
    <property type="match status" value="1"/>
</dbReference>
<dbReference type="PROSITE" id="PS50172">
    <property type="entry name" value="BRCT"/>
    <property type="match status" value="1"/>
</dbReference>
<dbReference type="PROSITE" id="PS01055">
    <property type="entry name" value="DNA_LIGASE_N1"/>
    <property type="match status" value="1"/>
</dbReference>
<dbReference type="PROSITE" id="PS01056">
    <property type="entry name" value="DNA_LIGASE_N2"/>
    <property type="match status" value="1"/>
</dbReference>
<organism>
    <name type="scientific">Streptococcus pneumoniae (strain Taiwan19F-14)</name>
    <dbReference type="NCBI Taxonomy" id="487213"/>
    <lineage>
        <taxon>Bacteria</taxon>
        <taxon>Bacillati</taxon>
        <taxon>Bacillota</taxon>
        <taxon>Bacilli</taxon>
        <taxon>Lactobacillales</taxon>
        <taxon>Streptococcaceae</taxon>
        <taxon>Streptococcus</taxon>
    </lineage>
</organism>